<sequence length="254" mass="28402">MAAAAATAATKGNGGGSGRVGAGDSSGARKKKGPGPVATAYLVIYNVVMTAGWLVIAVGLVRAYLAKGSYHSLYYSIERPLKFFQTGALLEILHCAIGIVPSSVVLTSFQVMSRVFLIWAVTHSVKEVQSEDSVLLFVIAWTITEIIRYSFYTFSLLNHLPYIIKWARYTLFIVLYPMGVTGELLTIYAALPFVRQAGLYSISLPNKYNFSFDYHAFLILIMISYIPLFPQLYFHMIHQRRKVLSHTEEHKKFE</sequence>
<gene>
    <name evidence="6" type="primary">Hacd2</name>
    <name evidence="5" type="synonym">Ptplb</name>
</gene>
<dbReference type="EC" id="4.2.1.134" evidence="2"/>
<dbReference type="EMBL" id="AF169286">
    <property type="protein sequence ID" value="AAF29489.1"/>
    <property type="molecule type" value="mRNA"/>
</dbReference>
<dbReference type="EMBL" id="AK148143">
    <property type="protein sequence ID" value="BAE28371.1"/>
    <property type="molecule type" value="mRNA"/>
</dbReference>
<dbReference type="EMBL" id="AK018144">
    <property type="protein sequence ID" value="BAB31092.1"/>
    <property type="molecule type" value="mRNA"/>
</dbReference>
<dbReference type="EMBL" id="BC027289">
    <property type="protein sequence ID" value="AAH27289.1"/>
    <property type="molecule type" value="mRNA"/>
</dbReference>
<dbReference type="EMBL" id="BC131899">
    <property type="protein sequence ID" value="AAI31900.1"/>
    <property type="molecule type" value="mRNA"/>
</dbReference>
<dbReference type="EMBL" id="BC131901">
    <property type="protein sequence ID" value="AAI31902.1"/>
    <property type="molecule type" value="mRNA"/>
</dbReference>
<dbReference type="CCDS" id="CCDS37321.1"/>
<dbReference type="RefSeq" id="NP_076076.2">
    <property type="nucleotide sequence ID" value="NM_023587.2"/>
</dbReference>
<dbReference type="BioGRID" id="214237">
    <property type="interactions" value="6"/>
</dbReference>
<dbReference type="FunCoup" id="Q9D3B1">
    <property type="interactions" value="1825"/>
</dbReference>
<dbReference type="STRING" id="10090.ENSMUSP00000060462"/>
<dbReference type="GlyCosmos" id="Q9D3B1">
    <property type="glycosylation" value="1 site, No reported glycans"/>
</dbReference>
<dbReference type="GlyGen" id="Q9D3B1">
    <property type="glycosylation" value="2 sites, 1 O-linked glycan (1 site)"/>
</dbReference>
<dbReference type="PhosphoSitePlus" id="Q9D3B1"/>
<dbReference type="SwissPalm" id="Q9D3B1"/>
<dbReference type="jPOST" id="Q9D3B1"/>
<dbReference type="PaxDb" id="10090-ENSMUSP00000060462"/>
<dbReference type="PeptideAtlas" id="Q9D3B1"/>
<dbReference type="ProteomicsDB" id="270931"/>
<dbReference type="Pumba" id="Q9D3B1"/>
<dbReference type="Antibodypedia" id="32955">
    <property type="antibodies" value="84 antibodies from 15 providers"/>
</dbReference>
<dbReference type="DNASU" id="70757"/>
<dbReference type="Ensembl" id="ENSMUST00000061156.10">
    <property type="protein sequence ID" value="ENSMUSP00000060462.9"/>
    <property type="gene ID" value="ENSMUSG00000035376.11"/>
</dbReference>
<dbReference type="GeneID" id="70757"/>
<dbReference type="KEGG" id="mmu:70757"/>
<dbReference type="UCSC" id="uc007zbi.1">
    <property type="organism name" value="mouse"/>
</dbReference>
<dbReference type="AGR" id="MGI:1918007"/>
<dbReference type="CTD" id="201562"/>
<dbReference type="MGI" id="MGI:1918007">
    <property type="gene designation" value="Hacd2"/>
</dbReference>
<dbReference type="VEuPathDB" id="HostDB:ENSMUSG00000035376"/>
<dbReference type="eggNOG" id="KOG3187">
    <property type="taxonomic scope" value="Eukaryota"/>
</dbReference>
<dbReference type="GeneTree" id="ENSGT00530000062962"/>
<dbReference type="HOGENOM" id="CLU_034302_2_0_1"/>
<dbReference type="InParanoid" id="Q9D3B1"/>
<dbReference type="OMA" id="SEWWLMY"/>
<dbReference type="OrthoDB" id="46988at2759"/>
<dbReference type="PhylomeDB" id="Q9D3B1"/>
<dbReference type="TreeFam" id="TF313326"/>
<dbReference type="Reactome" id="R-MMU-75876">
    <property type="pathway name" value="Synthesis of very long-chain fatty acyl-CoAs"/>
</dbReference>
<dbReference type="UniPathway" id="UPA00094"/>
<dbReference type="BioGRID-ORCS" id="70757">
    <property type="hits" value="10 hits in 78 CRISPR screens"/>
</dbReference>
<dbReference type="ChiTaRS" id="Hacd2">
    <property type="organism name" value="mouse"/>
</dbReference>
<dbReference type="PRO" id="PR:Q9D3B1"/>
<dbReference type="Proteomes" id="UP000000589">
    <property type="component" value="Chromosome 16"/>
</dbReference>
<dbReference type="RNAct" id="Q9D3B1">
    <property type="molecule type" value="protein"/>
</dbReference>
<dbReference type="Bgee" id="ENSMUSG00000035376">
    <property type="expression patterns" value="Expressed in right kidney and 207 other cell types or tissues"/>
</dbReference>
<dbReference type="GO" id="GO:0005783">
    <property type="term" value="C:endoplasmic reticulum"/>
    <property type="evidence" value="ECO:0000250"/>
    <property type="project" value="UniProtKB"/>
</dbReference>
<dbReference type="GO" id="GO:0005789">
    <property type="term" value="C:endoplasmic reticulum membrane"/>
    <property type="evidence" value="ECO:0007669"/>
    <property type="project" value="UniProtKB-SubCell"/>
</dbReference>
<dbReference type="GO" id="GO:0019899">
    <property type="term" value="F:enzyme binding"/>
    <property type="evidence" value="ECO:0000250"/>
    <property type="project" value="UniProtKB"/>
</dbReference>
<dbReference type="GO" id="GO:0102158">
    <property type="term" value="F:very-long-chain (3R)-3-hydroxyacyl-CoA dehydratase activity"/>
    <property type="evidence" value="ECO:0000250"/>
    <property type="project" value="UniProtKB"/>
</dbReference>
<dbReference type="GO" id="GO:0030497">
    <property type="term" value="P:fatty acid elongation"/>
    <property type="evidence" value="ECO:0000250"/>
    <property type="project" value="UniProtKB"/>
</dbReference>
<dbReference type="GO" id="GO:0030148">
    <property type="term" value="P:sphingolipid biosynthetic process"/>
    <property type="evidence" value="ECO:0000250"/>
    <property type="project" value="UniProtKB"/>
</dbReference>
<dbReference type="GO" id="GO:0042761">
    <property type="term" value="P:very long-chain fatty acid biosynthetic process"/>
    <property type="evidence" value="ECO:0000250"/>
    <property type="project" value="UniProtKB"/>
</dbReference>
<dbReference type="InterPro" id="IPR007482">
    <property type="entry name" value="Tyr_Pase-like_PTPLA"/>
</dbReference>
<dbReference type="PANTHER" id="PTHR11035">
    <property type="entry name" value="VERY-LONG-CHAIN (3R)-3-HYDROXYACYL-COA DEHYDRATASE"/>
    <property type="match status" value="1"/>
</dbReference>
<dbReference type="PANTHER" id="PTHR11035:SF17">
    <property type="entry name" value="VERY-LONG-CHAIN (3R)-3-HYDROXYACYL-COA DEHYDRATASE 2"/>
    <property type="match status" value="1"/>
</dbReference>
<dbReference type="Pfam" id="PF04387">
    <property type="entry name" value="PTPLA"/>
    <property type="match status" value="1"/>
</dbReference>
<reference key="1">
    <citation type="journal article" date="1999" name="Genomics">
        <title>Molecular cloning, chromosomal mapping, and developmental expression of a novel protein tyrosine phosphatase-like gene.</title>
        <authorList>
            <person name="Uwanogho D.A."/>
            <person name="Hardcastle Z."/>
            <person name="Balogh P."/>
            <person name="Mirza G."/>
            <person name="Thornburg K.L."/>
            <person name="Ragoussis J."/>
            <person name="Sharpe P.T."/>
        </authorList>
    </citation>
    <scope>NUCLEOTIDE SEQUENCE [MRNA]</scope>
</reference>
<reference key="2">
    <citation type="journal article" date="2005" name="Science">
        <title>The transcriptional landscape of the mammalian genome.</title>
        <authorList>
            <person name="Carninci P."/>
            <person name="Kasukawa T."/>
            <person name="Katayama S."/>
            <person name="Gough J."/>
            <person name="Frith M.C."/>
            <person name="Maeda N."/>
            <person name="Oyama R."/>
            <person name="Ravasi T."/>
            <person name="Lenhard B."/>
            <person name="Wells C."/>
            <person name="Kodzius R."/>
            <person name="Shimokawa K."/>
            <person name="Bajic V.B."/>
            <person name="Brenner S.E."/>
            <person name="Batalov S."/>
            <person name="Forrest A.R."/>
            <person name="Zavolan M."/>
            <person name="Davis M.J."/>
            <person name="Wilming L.G."/>
            <person name="Aidinis V."/>
            <person name="Allen J.E."/>
            <person name="Ambesi-Impiombato A."/>
            <person name="Apweiler R."/>
            <person name="Aturaliya R.N."/>
            <person name="Bailey T.L."/>
            <person name="Bansal M."/>
            <person name="Baxter L."/>
            <person name="Beisel K.W."/>
            <person name="Bersano T."/>
            <person name="Bono H."/>
            <person name="Chalk A.M."/>
            <person name="Chiu K.P."/>
            <person name="Choudhary V."/>
            <person name="Christoffels A."/>
            <person name="Clutterbuck D.R."/>
            <person name="Crowe M.L."/>
            <person name="Dalla E."/>
            <person name="Dalrymple B.P."/>
            <person name="de Bono B."/>
            <person name="Della Gatta G."/>
            <person name="di Bernardo D."/>
            <person name="Down T."/>
            <person name="Engstrom P."/>
            <person name="Fagiolini M."/>
            <person name="Faulkner G."/>
            <person name="Fletcher C.F."/>
            <person name="Fukushima T."/>
            <person name="Furuno M."/>
            <person name="Futaki S."/>
            <person name="Gariboldi M."/>
            <person name="Georgii-Hemming P."/>
            <person name="Gingeras T.R."/>
            <person name="Gojobori T."/>
            <person name="Green R.E."/>
            <person name="Gustincich S."/>
            <person name="Harbers M."/>
            <person name="Hayashi Y."/>
            <person name="Hensch T.K."/>
            <person name="Hirokawa N."/>
            <person name="Hill D."/>
            <person name="Huminiecki L."/>
            <person name="Iacono M."/>
            <person name="Ikeo K."/>
            <person name="Iwama A."/>
            <person name="Ishikawa T."/>
            <person name="Jakt M."/>
            <person name="Kanapin A."/>
            <person name="Katoh M."/>
            <person name="Kawasawa Y."/>
            <person name="Kelso J."/>
            <person name="Kitamura H."/>
            <person name="Kitano H."/>
            <person name="Kollias G."/>
            <person name="Krishnan S.P."/>
            <person name="Kruger A."/>
            <person name="Kummerfeld S.K."/>
            <person name="Kurochkin I.V."/>
            <person name="Lareau L.F."/>
            <person name="Lazarevic D."/>
            <person name="Lipovich L."/>
            <person name="Liu J."/>
            <person name="Liuni S."/>
            <person name="McWilliam S."/>
            <person name="Madan Babu M."/>
            <person name="Madera M."/>
            <person name="Marchionni L."/>
            <person name="Matsuda H."/>
            <person name="Matsuzawa S."/>
            <person name="Miki H."/>
            <person name="Mignone F."/>
            <person name="Miyake S."/>
            <person name="Morris K."/>
            <person name="Mottagui-Tabar S."/>
            <person name="Mulder N."/>
            <person name="Nakano N."/>
            <person name="Nakauchi H."/>
            <person name="Ng P."/>
            <person name="Nilsson R."/>
            <person name="Nishiguchi S."/>
            <person name="Nishikawa S."/>
            <person name="Nori F."/>
            <person name="Ohara O."/>
            <person name="Okazaki Y."/>
            <person name="Orlando V."/>
            <person name="Pang K.C."/>
            <person name="Pavan W.J."/>
            <person name="Pavesi G."/>
            <person name="Pesole G."/>
            <person name="Petrovsky N."/>
            <person name="Piazza S."/>
            <person name="Reed J."/>
            <person name="Reid J.F."/>
            <person name="Ring B.Z."/>
            <person name="Ringwald M."/>
            <person name="Rost B."/>
            <person name="Ruan Y."/>
            <person name="Salzberg S.L."/>
            <person name="Sandelin A."/>
            <person name="Schneider C."/>
            <person name="Schoenbach C."/>
            <person name="Sekiguchi K."/>
            <person name="Semple C.A."/>
            <person name="Seno S."/>
            <person name="Sessa L."/>
            <person name="Sheng Y."/>
            <person name="Shibata Y."/>
            <person name="Shimada H."/>
            <person name="Shimada K."/>
            <person name="Silva D."/>
            <person name="Sinclair B."/>
            <person name="Sperling S."/>
            <person name="Stupka E."/>
            <person name="Sugiura K."/>
            <person name="Sultana R."/>
            <person name="Takenaka Y."/>
            <person name="Taki K."/>
            <person name="Tammoja K."/>
            <person name="Tan S.L."/>
            <person name="Tang S."/>
            <person name="Taylor M.S."/>
            <person name="Tegner J."/>
            <person name="Teichmann S.A."/>
            <person name="Ueda H.R."/>
            <person name="van Nimwegen E."/>
            <person name="Verardo R."/>
            <person name="Wei C.L."/>
            <person name="Yagi K."/>
            <person name="Yamanishi H."/>
            <person name="Zabarovsky E."/>
            <person name="Zhu S."/>
            <person name="Zimmer A."/>
            <person name="Hide W."/>
            <person name="Bult C."/>
            <person name="Grimmond S.M."/>
            <person name="Teasdale R.D."/>
            <person name="Liu E.T."/>
            <person name="Brusic V."/>
            <person name="Quackenbush J."/>
            <person name="Wahlestedt C."/>
            <person name="Mattick J.S."/>
            <person name="Hume D.A."/>
            <person name="Kai C."/>
            <person name="Sasaki D."/>
            <person name="Tomaru Y."/>
            <person name="Fukuda S."/>
            <person name="Kanamori-Katayama M."/>
            <person name="Suzuki M."/>
            <person name="Aoki J."/>
            <person name="Arakawa T."/>
            <person name="Iida J."/>
            <person name="Imamura K."/>
            <person name="Itoh M."/>
            <person name="Kato T."/>
            <person name="Kawaji H."/>
            <person name="Kawagashira N."/>
            <person name="Kawashima T."/>
            <person name="Kojima M."/>
            <person name="Kondo S."/>
            <person name="Konno H."/>
            <person name="Nakano K."/>
            <person name="Ninomiya N."/>
            <person name="Nishio T."/>
            <person name="Okada M."/>
            <person name="Plessy C."/>
            <person name="Shibata K."/>
            <person name="Shiraki T."/>
            <person name="Suzuki S."/>
            <person name="Tagami M."/>
            <person name="Waki K."/>
            <person name="Watahiki A."/>
            <person name="Okamura-Oho Y."/>
            <person name="Suzuki H."/>
            <person name="Kawai J."/>
            <person name="Hayashizaki Y."/>
        </authorList>
    </citation>
    <scope>NUCLEOTIDE SEQUENCE [LARGE SCALE MRNA]</scope>
    <source>
        <strain>C57BL/6J</strain>
        <tissue>Medulla oblongata</tissue>
    </source>
</reference>
<reference key="3">
    <citation type="journal article" date="2004" name="Genome Res.">
        <title>The status, quality, and expansion of the NIH full-length cDNA project: the Mammalian Gene Collection (MGC).</title>
        <authorList>
            <consortium name="The MGC Project Team"/>
        </authorList>
    </citation>
    <scope>NUCLEOTIDE SEQUENCE [LARGE SCALE MRNA]</scope>
    <source>
        <strain>FVB/N</strain>
        <tissue>Brain</tissue>
        <tissue>Mammary tumor</tissue>
    </source>
</reference>
<reference key="4">
    <citation type="journal article" date="2010" name="Cell">
        <title>A tissue-specific atlas of mouse protein phosphorylation and expression.</title>
        <authorList>
            <person name="Huttlin E.L."/>
            <person name="Jedrychowski M.P."/>
            <person name="Elias J.E."/>
            <person name="Goswami T."/>
            <person name="Rad R."/>
            <person name="Beausoleil S.A."/>
            <person name="Villen J."/>
            <person name="Haas W."/>
            <person name="Sowa M.E."/>
            <person name="Gygi S.P."/>
        </authorList>
    </citation>
    <scope>IDENTIFICATION BY MASS SPECTROMETRY [LARGE SCALE ANALYSIS]</scope>
    <source>
        <tissue>Brown adipose tissue</tissue>
        <tissue>Kidney</tissue>
        <tissue>Liver</tissue>
        <tissue>Testis</tissue>
    </source>
</reference>
<feature type="initiator methionine" description="Removed" evidence="2">
    <location>
        <position position="1"/>
    </location>
</feature>
<feature type="chain" id="PRO_0000349320" description="Very-long-chain (3R)-3-hydroxyacyl-CoA dehydratase 2">
    <location>
        <begin position="2"/>
        <end position="254"/>
    </location>
</feature>
<feature type="topological domain" description="Cytoplasmic" evidence="3">
    <location>
        <begin position="2"/>
        <end position="41"/>
    </location>
</feature>
<feature type="transmembrane region" description="Helical" evidence="3">
    <location>
        <begin position="42"/>
        <end position="60"/>
    </location>
</feature>
<feature type="topological domain" description="Lumenal" evidence="3">
    <location>
        <begin position="61"/>
        <end position="79"/>
    </location>
</feature>
<feature type="transmembrane region" description="Helical" evidence="3">
    <location>
        <begin position="80"/>
        <end position="97"/>
    </location>
</feature>
<feature type="topological domain" description="Cytoplasmic" evidence="3">
    <location>
        <begin position="98"/>
        <end position="107"/>
    </location>
</feature>
<feature type="transmembrane region" description="Helical" evidence="3">
    <location>
        <begin position="108"/>
        <end position="125"/>
    </location>
</feature>
<feature type="topological domain" description="Lumenal" evidence="3">
    <location>
        <begin position="126"/>
        <end position="130"/>
    </location>
</feature>
<feature type="transmembrane region" description="Helical" evidence="3">
    <location>
        <begin position="131"/>
        <end position="146"/>
    </location>
</feature>
<feature type="topological domain" description="Cytoplasmic" evidence="3">
    <location>
        <begin position="147"/>
        <end position="169"/>
    </location>
</feature>
<feature type="transmembrane region" description="Helical" evidence="3">
    <location>
        <begin position="170"/>
        <end position="187"/>
    </location>
</feature>
<feature type="topological domain" description="Lumenal" evidence="3">
    <location>
        <begin position="188"/>
        <end position="217"/>
    </location>
</feature>
<feature type="transmembrane region" description="Helical" evidence="3">
    <location>
        <begin position="218"/>
        <end position="235"/>
    </location>
</feature>
<feature type="topological domain" description="Cytoplasmic" evidence="3">
    <location>
        <begin position="236"/>
        <end position="254"/>
    </location>
</feature>
<feature type="region of interest" description="Disordered" evidence="4">
    <location>
        <begin position="1"/>
        <end position="34"/>
    </location>
</feature>
<feature type="region of interest" description="May be involved in interaction with TECR" evidence="2">
    <location>
        <begin position="198"/>
        <end position="214"/>
    </location>
</feature>
<feature type="compositionally biased region" description="Low complexity" evidence="4">
    <location>
        <begin position="1"/>
        <end position="10"/>
    </location>
</feature>
<feature type="compositionally biased region" description="Gly residues" evidence="4">
    <location>
        <begin position="12"/>
        <end position="21"/>
    </location>
</feature>
<feature type="active site" evidence="1">
    <location>
        <position position="176"/>
    </location>
</feature>
<feature type="active site" evidence="1">
    <location>
        <position position="183"/>
    </location>
</feature>
<feature type="modified residue" description="N-acetylalanine" evidence="2">
    <location>
        <position position="2"/>
    </location>
</feature>
<feature type="glycosylation site" description="N-linked (GlcNAc...) asparagine" evidence="3">
    <location>
        <position position="209"/>
    </location>
</feature>
<feature type="sequence conflict" description="In Ref. 1; AAF29489." evidence="5" ref="1">
    <original>S</original>
    <variation>A</variation>
    <location>
        <position position="130"/>
    </location>
</feature>
<feature type="sequence conflict" description="In Ref. 1; AAF29489." evidence="5" ref="1">
    <original>I</original>
    <variation>ITEII</variation>
    <location>
        <position position="147"/>
    </location>
</feature>
<feature type="sequence conflict" description="In Ref. 2; BAE28371." evidence="5" ref="2">
    <original>Q</original>
    <variation>R</variation>
    <location>
        <position position="239"/>
    </location>
</feature>
<protein>
    <recommendedName>
        <fullName evidence="5">Very-long-chain (3R)-3-hydroxyacyl-CoA dehydratase 2</fullName>
        <ecNumber evidence="2">4.2.1.134</ecNumber>
    </recommendedName>
    <alternativeName>
        <fullName evidence="5">3-hydroxyacyl-CoA dehydratase 2</fullName>
        <shortName evidence="5">HACD2</shortName>
    </alternativeName>
    <alternativeName>
        <fullName evidence="6">Protein-tyrosine phosphatase-like member B</fullName>
    </alternativeName>
</protein>
<accession>Q9D3B1</accession>
<accession>Q3UG38</accession>
<accession>Q9JLK1</accession>
<name>HACD2_MOUSE</name>
<keyword id="KW-0007">Acetylation</keyword>
<keyword id="KW-0256">Endoplasmic reticulum</keyword>
<keyword id="KW-0275">Fatty acid biosynthesis</keyword>
<keyword id="KW-0276">Fatty acid metabolism</keyword>
<keyword id="KW-0325">Glycoprotein</keyword>
<keyword id="KW-0444">Lipid biosynthesis</keyword>
<keyword id="KW-0443">Lipid metabolism</keyword>
<keyword id="KW-0456">Lyase</keyword>
<keyword id="KW-0472">Membrane</keyword>
<keyword id="KW-1185">Reference proteome</keyword>
<keyword id="KW-0812">Transmembrane</keyword>
<keyword id="KW-1133">Transmembrane helix</keyword>
<proteinExistence type="evidence at protein level"/>
<evidence type="ECO:0000250" key="1">
    <source>
        <dbReference type="UniProtKB" id="P40857"/>
    </source>
</evidence>
<evidence type="ECO:0000250" key="2">
    <source>
        <dbReference type="UniProtKB" id="Q6Y1H2"/>
    </source>
</evidence>
<evidence type="ECO:0000255" key="3"/>
<evidence type="ECO:0000256" key="4">
    <source>
        <dbReference type="SAM" id="MobiDB-lite"/>
    </source>
</evidence>
<evidence type="ECO:0000305" key="5"/>
<evidence type="ECO:0000312" key="6">
    <source>
        <dbReference type="MGI" id="MGI:1918007"/>
    </source>
</evidence>
<comment type="function">
    <text evidence="2">Catalyzes the third of the very long-chain fatty acids (VLCFA) elongation four-step cycle (condensation, reduction, dehydration, and reduction). This endoplasmic reticulum-elongation process is characterized by the addition of two carbons to the lipid chain through each cycle. This enzyme catalyzes the dehydration of the 3-hydroxyacyl-CoA intermediate into trans-2,3-enoyl-CoA, within each cycle of elongation. Therefore, it participates in the production of various VLCFAs involved in multiple biological processes as precursors of membrane lipids and lipid mediators.</text>
</comment>
<comment type="catalytic activity">
    <reaction evidence="2">
        <text>a very-long-chain (3R)-3-hydroxyacyl-CoA = a very-long-chain (2E)-enoyl-CoA + H2O</text>
        <dbReference type="Rhea" id="RHEA:45812"/>
        <dbReference type="ChEBI" id="CHEBI:15377"/>
        <dbReference type="ChEBI" id="CHEBI:83728"/>
        <dbReference type="ChEBI" id="CHEBI:85440"/>
        <dbReference type="EC" id="4.2.1.134"/>
    </reaction>
    <physiologicalReaction direction="left-to-right" evidence="2">
        <dbReference type="Rhea" id="RHEA:45813"/>
    </physiologicalReaction>
</comment>
<comment type="catalytic activity">
    <reaction evidence="2">
        <text>(3R)-hydroxyhexadecanoyl-CoA = (2E)-hexadecenoyl-CoA + H2O</text>
        <dbReference type="Rhea" id="RHEA:39159"/>
        <dbReference type="ChEBI" id="CHEBI:15377"/>
        <dbReference type="ChEBI" id="CHEBI:61526"/>
        <dbReference type="ChEBI" id="CHEBI:74278"/>
    </reaction>
    <physiologicalReaction direction="left-to-right" evidence="2">
        <dbReference type="Rhea" id="RHEA:39160"/>
    </physiologicalReaction>
</comment>
<comment type="catalytic activity">
    <reaction evidence="2">
        <text>(3R)-hydroxyoctadecanoyl-CoA = (2E)-octadecenoyl-CoA + H2O</text>
        <dbReference type="Rhea" id="RHEA:39155"/>
        <dbReference type="ChEBI" id="CHEBI:15377"/>
        <dbReference type="ChEBI" id="CHEBI:71412"/>
        <dbReference type="ChEBI" id="CHEBI:76374"/>
    </reaction>
    <physiologicalReaction direction="left-to-right" evidence="2">
        <dbReference type="Rhea" id="RHEA:39156"/>
    </physiologicalReaction>
</comment>
<comment type="catalytic activity">
    <reaction evidence="2">
        <text>(3R)-hydroxyeicosanoyl-CoA = (2E)-eicosenoyl-CoA + H2O</text>
        <dbReference type="Rhea" id="RHEA:39175"/>
        <dbReference type="ChEBI" id="CHEBI:15377"/>
        <dbReference type="ChEBI" id="CHEBI:74691"/>
        <dbReference type="ChEBI" id="CHEBI:76373"/>
    </reaction>
    <physiologicalReaction direction="left-to-right" evidence="2">
        <dbReference type="Rhea" id="RHEA:39176"/>
    </physiologicalReaction>
</comment>
<comment type="catalytic activity">
    <reaction evidence="2">
        <text>(3R)-hydroxydocosanoyl-CoA = (2E)-docosenoyl-CoA + H2O</text>
        <dbReference type="Rhea" id="RHEA:39187"/>
        <dbReference type="ChEBI" id="CHEBI:15377"/>
        <dbReference type="ChEBI" id="CHEBI:74692"/>
        <dbReference type="ChEBI" id="CHEBI:76375"/>
    </reaction>
    <physiologicalReaction direction="left-to-right" evidence="2">
        <dbReference type="Rhea" id="RHEA:39188"/>
    </physiologicalReaction>
</comment>
<comment type="catalytic activity">
    <reaction evidence="2">
        <text>(3R)-hydroxytetracosanoyl-CoA = (2E)-tetracosenoyl-CoA + H2O</text>
        <dbReference type="Rhea" id="RHEA:39199"/>
        <dbReference type="ChEBI" id="CHEBI:15377"/>
        <dbReference type="ChEBI" id="CHEBI:74693"/>
        <dbReference type="ChEBI" id="CHEBI:76377"/>
    </reaction>
    <physiologicalReaction direction="left-to-right" evidence="2">
        <dbReference type="Rhea" id="RHEA:39200"/>
    </physiologicalReaction>
</comment>
<comment type="catalytic activity">
    <reaction evidence="2">
        <text>(3R)-hydroxyhexacosanoyl-CoA = (2E)-hexacosenoyl-CoA + H2O</text>
        <dbReference type="Rhea" id="RHEA:39211"/>
        <dbReference type="ChEBI" id="CHEBI:15377"/>
        <dbReference type="ChEBI" id="CHEBI:74281"/>
        <dbReference type="ChEBI" id="CHEBI:76378"/>
    </reaction>
    <physiologicalReaction direction="left-to-right" evidence="2">
        <dbReference type="Rhea" id="RHEA:39212"/>
    </physiologicalReaction>
</comment>
<comment type="pathway">
    <text evidence="2">Lipid metabolism; fatty acid biosynthesis.</text>
</comment>
<comment type="subunit">
    <text evidence="2">May interact with enzymes of the ELO family (including ELOVL1); with those enzymes that mediate condensation, the first of the four steps of the reaction cycle responsible for fatty acids elongation, may be part of a larger fatty acids elongase complex. Interacts with BCAP31. Interacts with TECR (By similarity).</text>
</comment>
<comment type="subcellular location">
    <subcellularLocation>
        <location evidence="2">Endoplasmic reticulum membrane</location>
        <topology evidence="2">Multi-pass membrane protein</topology>
    </subcellularLocation>
</comment>
<comment type="similarity">
    <text evidence="5">Belongs to the very long-chain fatty acids dehydratase HACD family.</text>
</comment>
<comment type="caution">
    <text evidence="2">Shares some similarity with tyrosine phosphatase proteins but it has probably no phosphatase activity.</text>
</comment>
<organism>
    <name type="scientific">Mus musculus</name>
    <name type="common">Mouse</name>
    <dbReference type="NCBI Taxonomy" id="10090"/>
    <lineage>
        <taxon>Eukaryota</taxon>
        <taxon>Metazoa</taxon>
        <taxon>Chordata</taxon>
        <taxon>Craniata</taxon>
        <taxon>Vertebrata</taxon>
        <taxon>Euteleostomi</taxon>
        <taxon>Mammalia</taxon>
        <taxon>Eutheria</taxon>
        <taxon>Euarchontoglires</taxon>
        <taxon>Glires</taxon>
        <taxon>Rodentia</taxon>
        <taxon>Myomorpha</taxon>
        <taxon>Muroidea</taxon>
        <taxon>Muridae</taxon>
        <taxon>Murinae</taxon>
        <taxon>Mus</taxon>
        <taxon>Mus</taxon>
    </lineage>
</organism>